<sequence>MSEIPAELYYTDEHEWVLRTGDDTLRVGITDYAQAALGDVVFVQLPDVGAELTSGESFGEVESTKSVSDLYAPVSAKVLAVNGNLEASPDLVNSDPYGEGWLVDLQLDADDMEAALGGLLDADGYRGVVTE</sequence>
<name>GCSH_MYCSJ</name>
<evidence type="ECO:0000255" key="1">
    <source>
        <dbReference type="HAMAP-Rule" id="MF_00272"/>
    </source>
</evidence>
<evidence type="ECO:0000255" key="2">
    <source>
        <dbReference type="PROSITE-ProRule" id="PRU01066"/>
    </source>
</evidence>
<feature type="chain" id="PRO_0000302394" description="Glycine cleavage system H protein">
    <location>
        <begin position="1"/>
        <end position="131"/>
    </location>
</feature>
<feature type="domain" description="Lipoyl-binding" evidence="2">
    <location>
        <begin position="24"/>
        <end position="106"/>
    </location>
</feature>
<feature type="modified residue" description="N6-lipoyllysine" evidence="1">
    <location>
        <position position="65"/>
    </location>
</feature>
<dbReference type="EMBL" id="CP000580">
    <property type="protein sequence ID" value="ABN98655.1"/>
    <property type="molecule type" value="Genomic_DNA"/>
</dbReference>
<dbReference type="SMR" id="A3Q0H8"/>
<dbReference type="KEGG" id="mjl:Mjls_2876"/>
<dbReference type="HOGENOM" id="CLU_097408_2_2_11"/>
<dbReference type="BioCyc" id="MSP164757:G1G8C-2894-MONOMER"/>
<dbReference type="GO" id="GO:0005829">
    <property type="term" value="C:cytosol"/>
    <property type="evidence" value="ECO:0007669"/>
    <property type="project" value="TreeGrafter"/>
</dbReference>
<dbReference type="GO" id="GO:0005960">
    <property type="term" value="C:glycine cleavage complex"/>
    <property type="evidence" value="ECO:0007669"/>
    <property type="project" value="InterPro"/>
</dbReference>
<dbReference type="GO" id="GO:0019464">
    <property type="term" value="P:glycine decarboxylation via glycine cleavage system"/>
    <property type="evidence" value="ECO:0007669"/>
    <property type="project" value="UniProtKB-UniRule"/>
</dbReference>
<dbReference type="CDD" id="cd06848">
    <property type="entry name" value="GCS_H"/>
    <property type="match status" value="1"/>
</dbReference>
<dbReference type="Gene3D" id="2.40.50.100">
    <property type="match status" value="1"/>
</dbReference>
<dbReference type="HAMAP" id="MF_00272">
    <property type="entry name" value="GcvH"/>
    <property type="match status" value="1"/>
</dbReference>
<dbReference type="InterPro" id="IPR000089">
    <property type="entry name" value="Biotin_lipoyl"/>
</dbReference>
<dbReference type="InterPro" id="IPR002930">
    <property type="entry name" value="GCV_H"/>
</dbReference>
<dbReference type="InterPro" id="IPR033753">
    <property type="entry name" value="GCV_H/Fam206"/>
</dbReference>
<dbReference type="InterPro" id="IPR017453">
    <property type="entry name" value="GCV_H_sub"/>
</dbReference>
<dbReference type="InterPro" id="IPR011053">
    <property type="entry name" value="Single_hybrid_motif"/>
</dbReference>
<dbReference type="NCBIfam" id="TIGR00527">
    <property type="entry name" value="gcvH"/>
    <property type="match status" value="1"/>
</dbReference>
<dbReference type="NCBIfam" id="NF002270">
    <property type="entry name" value="PRK01202.1"/>
    <property type="match status" value="1"/>
</dbReference>
<dbReference type="PANTHER" id="PTHR11715">
    <property type="entry name" value="GLYCINE CLEAVAGE SYSTEM H PROTEIN"/>
    <property type="match status" value="1"/>
</dbReference>
<dbReference type="PANTHER" id="PTHR11715:SF3">
    <property type="entry name" value="GLYCINE CLEAVAGE SYSTEM H PROTEIN-RELATED"/>
    <property type="match status" value="1"/>
</dbReference>
<dbReference type="Pfam" id="PF01597">
    <property type="entry name" value="GCV_H"/>
    <property type="match status" value="1"/>
</dbReference>
<dbReference type="SUPFAM" id="SSF51230">
    <property type="entry name" value="Single hybrid motif"/>
    <property type="match status" value="1"/>
</dbReference>
<dbReference type="PROSITE" id="PS50968">
    <property type="entry name" value="BIOTINYL_LIPOYL"/>
    <property type="match status" value="1"/>
</dbReference>
<gene>
    <name evidence="1" type="primary">gcvH</name>
    <name type="ordered locus">Mjls_2876</name>
</gene>
<reference key="1">
    <citation type="submission" date="2007-02" db="EMBL/GenBank/DDBJ databases">
        <title>Complete sequence of Mycobacterium sp. JLS.</title>
        <authorList>
            <consortium name="US DOE Joint Genome Institute"/>
            <person name="Copeland A."/>
            <person name="Lucas S."/>
            <person name="Lapidus A."/>
            <person name="Barry K."/>
            <person name="Detter J.C."/>
            <person name="Glavina del Rio T."/>
            <person name="Hammon N."/>
            <person name="Israni S."/>
            <person name="Dalin E."/>
            <person name="Tice H."/>
            <person name="Pitluck S."/>
            <person name="Chain P."/>
            <person name="Malfatti S."/>
            <person name="Shin M."/>
            <person name="Vergez L."/>
            <person name="Schmutz J."/>
            <person name="Larimer F."/>
            <person name="Land M."/>
            <person name="Hauser L."/>
            <person name="Kyrpides N."/>
            <person name="Mikhailova N."/>
            <person name="Miller C.D."/>
            <person name="Anderson A.J."/>
            <person name="Sims R.C."/>
            <person name="Richardson P."/>
        </authorList>
    </citation>
    <scope>NUCLEOTIDE SEQUENCE [LARGE SCALE GENOMIC DNA]</scope>
    <source>
        <strain>JLS</strain>
    </source>
</reference>
<accession>A3Q0H8</accession>
<organism>
    <name type="scientific">Mycobacterium sp. (strain JLS)</name>
    <dbReference type="NCBI Taxonomy" id="164757"/>
    <lineage>
        <taxon>Bacteria</taxon>
        <taxon>Bacillati</taxon>
        <taxon>Actinomycetota</taxon>
        <taxon>Actinomycetes</taxon>
        <taxon>Mycobacteriales</taxon>
        <taxon>Mycobacteriaceae</taxon>
        <taxon>Mycobacterium</taxon>
    </lineage>
</organism>
<protein>
    <recommendedName>
        <fullName evidence="1">Glycine cleavage system H protein</fullName>
    </recommendedName>
</protein>
<proteinExistence type="inferred from homology"/>
<keyword id="KW-0450">Lipoyl</keyword>
<comment type="function">
    <text evidence="1">The glycine cleavage system catalyzes the degradation of glycine. The H protein shuttles the methylamine group of glycine from the P protein to the T protein.</text>
</comment>
<comment type="cofactor">
    <cofactor evidence="1">
        <name>(R)-lipoate</name>
        <dbReference type="ChEBI" id="CHEBI:83088"/>
    </cofactor>
    <text evidence="1">Binds 1 lipoyl cofactor covalently.</text>
</comment>
<comment type="subunit">
    <text evidence="1">The glycine cleavage system is composed of four proteins: P, T, L and H.</text>
</comment>
<comment type="similarity">
    <text evidence="1">Belongs to the GcvH family.</text>
</comment>